<organism>
    <name type="scientific">Drosophila melanogaster</name>
    <name type="common">Fruit fly</name>
    <dbReference type="NCBI Taxonomy" id="7227"/>
    <lineage>
        <taxon>Eukaryota</taxon>
        <taxon>Metazoa</taxon>
        <taxon>Ecdysozoa</taxon>
        <taxon>Arthropoda</taxon>
        <taxon>Hexapoda</taxon>
        <taxon>Insecta</taxon>
        <taxon>Pterygota</taxon>
        <taxon>Neoptera</taxon>
        <taxon>Endopterygota</taxon>
        <taxon>Diptera</taxon>
        <taxon>Brachycera</taxon>
        <taxon>Muscomorpha</taxon>
        <taxon>Ephydroidea</taxon>
        <taxon>Drosophilidae</taxon>
        <taxon>Drosophila</taxon>
        <taxon>Sophophora</taxon>
    </lineage>
</organism>
<name>CF2_DROME</name>
<sequence>MIKSTTNPQEQRLPRPEDQSPAPPPPPPSSATTSTAAPATPTHQVATVIANMDTLKTAFLPNLSMDPNVHVSPHYCPMCHQQFERPQHVADHMQLCHGITLNAQGAIATLDGGHPQAQQHPKLSHPCFNCDEKFGNAVDLDEHHRLAHQTPAFLSRCLMCSIYGIHSATQQPNEYKCTQCGSICTTAMLAAGQQGFMEQQEAAVTPDDQLPAMAPRDMRLTPEEQHHQQQLQAEHHHQQQHQQQQQQQQQQQELLEQQQREMQEQAQQQQVHHHQQDQDLAGDQVALKVPPLTVKLNKNANGGAIVSHPQVIIKEEPLSLSDSGDVVNSVPVYAIQANPGVPAPASSGVLVGTQTVPADLAHKIRHKCPDCPKTFKTPGTLAMHRKIHTGEADATPKERPYTCSYCGKSFTQSNTLKQHTRIHTGEKPFRCGYCGRAFTVKDYLNKHLTTHTGEKPFHCGYCEKSFSVKDYLTKHIRTHTGEKPYTCPYCDKRFTQRSALTVHTTKLHPL</sequence>
<dbReference type="EMBL" id="M97196">
    <property type="protein sequence ID" value="AAA28394.1"/>
    <property type="status" value="ALT_SEQ"/>
    <property type="molecule type" value="Genomic_DNA"/>
</dbReference>
<dbReference type="EMBL" id="M97196">
    <property type="protein sequence ID" value="AAA28395.1"/>
    <property type="molecule type" value="Genomic_DNA"/>
</dbReference>
<dbReference type="EMBL" id="M97196">
    <property type="protein sequence ID" value="AAA28396.1"/>
    <property type="molecule type" value="Genomic_DNA"/>
</dbReference>
<dbReference type="EMBL" id="AE014134">
    <property type="protein sequence ID" value="AAF50966.2"/>
    <property type="molecule type" value="Genomic_DNA"/>
</dbReference>
<dbReference type="EMBL" id="AE014134">
    <property type="protein sequence ID" value="AAO41152.1"/>
    <property type="molecule type" value="Genomic_DNA"/>
</dbReference>
<dbReference type="EMBL" id="AE014134">
    <property type="protein sequence ID" value="AAO41153.1"/>
    <property type="molecule type" value="Genomic_DNA"/>
</dbReference>
<dbReference type="EMBL" id="BT028816">
    <property type="protein sequence ID" value="ABI34197.1"/>
    <property type="molecule type" value="mRNA"/>
</dbReference>
<dbReference type="EMBL" id="BT016125">
    <property type="protein sequence ID" value="AAV37010.1"/>
    <property type="status" value="ALT_SEQ"/>
    <property type="molecule type" value="mRNA"/>
</dbReference>
<dbReference type="EMBL" id="X53380">
    <property type="protein sequence ID" value="CAA37460.1"/>
    <property type="molecule type" value="mRNA"/>
</dbReference>
<dbReference type="PIR" id="A36901">
    <property type="entry name" value="A36901"/>
</dbReference>
<dbReference type="PIR" id="B36901">
    <property type="entry name" value="B36901"/>
</dbReference>
<dbReference type="PIR" id="C36901">
    <property type="entry name" value="C36901"/>
</dbReference>
<dbReference type="RefSeq" id="NP_523474.1">
    <molecule id="P20385-1"/>
    <property type="nucleotide sequence ID" value="NM_078750.4"/>
</dbReference>
<dbReference type="RefSeq" id="NP_787977.2">
    <molecule id="P20385-2"/>
    <property type="nucleotide sequence ID" value="NM_175963.3"/>
</dbReference>
<dbReference type="RefSeq" id="NP_787978.1">
    <molecule id="P20385-2"/>
    <property type="nucleotide sequence ID" value="NM_175964.2"/>
</dbReference>
<dbReference type="RefSeq" id="NP_787979.1">
    <molecule id="P20385-2"/>
    <property type="nucleotide sequence ID" value="NM_175965.2"/>
</dbReference>
<dbReference type="SMR" id="P20385"/>
<dbReference type="BioGRID" id="59880">
    <property type="interactions" value="10"/>
</dbReference>
<dbReference type="FunCoup" id="P20385">
    <property type="interactions" value="286"/>
</dbReference>
<dbReference type="IntAct" id="P20385">
    <property type="interactions" value="5"/>
</dbReference>
<dbReference type="STRING" id="7227.FBpp0422630"/>
<dbReference type="PaxDb" id="7227-FBpp0088592"/>
<dbReference type="DNASU" id="33692"/>
<dbReference type="EnsemblMetazoa" id="FBtr0089647">
    <molecule id="P20385-2"/>
    <property type="protein sequence ID" value="FBpp0088590"/>
    <property type="gene ID" value="FBgn0000286"/>
</dbReference>
<dbReference type="EnsemblMetazoa" id="FBtr0089648">
    <molecule id="P20385-2"/>
    <property type="protein sequence ID" value="FBpp0088591"/>
    <property type="gene ID" value="FBgn0000286"/>
</dbReference>
<dbReference type="EnsemblMetazoa" id="FBtr0089649">
    <molecule id="P20385-1"/>
    <property type="protein sequence ID" value="FBpp0088592"/>
    <property type="gene ID" value="FBgn0000286"/>
</dbReference>
<dbReference type="EnsemblMetazoa" id="FBtr0304887">
    <molecule id="P20385-2"/>
    <property type="protein sequence ID" value="FBpp0293426"/>
    <property type="gene ID" value="FBgn0000286"/>
</dbReference>
<dbReference type="GeneID" id="33692"/>
<dbReference type="KEGG" id="dme:Dmel_CG11924"/>
<dbReference type="AGR" id="FB:FBgn0000286"/>
<dbReference type="CTD" id="33692"/>
<dbReference type="FlyBase" id="FBgn0000286">
    <property type="gene designation" value="Cf2"/>
</dbReference>
<dbReference type="VEuPathDB" id="VectorBase:FBgn0000286"/>
<dbReference type="eggNOG" id="KOG1721">
    <property type="taxonomic scope" value="Eukaryota"/>
</dbReference>
<dbReference type="GeneTree" id="ENSGT00940000166773"/>
<dbReference type="InParanoid" id="P20385"/>
<dbReference type="OMA" id="SFMEQQE"/>
<dbReference type="OrthoDB" id="6077919at2759"/>
<dbReference type="SignaLink" id="P20385"/>
<dbReference type="BioGRID-ORCS" id="33692">
    <property type="hits" value="0 hits in 1 CRISPR screen"/>
</dbReference>
<dbReference type="ChiTaRS" id="Cf2">
    <property type="organism name" value="fly"/>
</dbReference>
<dbReference type="GenomeRNAi" id="33692"/>
<dbReference type="PRO" id="PR:P20385"/>
<dbReference type="Proteomes" id="UP000000803">
    <property type="component" value="Chromosome 2L"/>
</dbReference>
<dbReference type="Bgee" id="FBgn0000286">
    <property type="expression patterns" value="Expressed in fat body cell in arthropod fat body and 271 other cell types or tissues"/>
</dbReference>
<dbReference type="ExpressionAtlas" id="P20385">
    <property type="expression patterns" value="baseline and differential"/>
</dbReference>
<dbReference type="GO" id="GO:0005829">
    <property type="term" value="C:cytosol"/>
    <property type="evidence" value="ECO:0000314"/>
    <property type="project" value="FlyBase"/>
</dbReference>
<dbReference type="GO" id="GO:0005634">
    <property type="term" value="C:nucleus"/>
    <property type="evidence" value="ECO:0000314"/>
    <property type="project" value="FlyBase"/>
</dbReference>
<dbReference type="GO" id="GO:0001228">
    <property type="term" value="F:DNA-binding transcription activator activity, RNA polymerase II-specific"/>
    <property type="evidence" value="ECO:0000314"/>
    <property type="project" value="FlyBase"/>
</dbReference>
<dbReference type="GO" id="GO:0003700">
    <property type="term" value="F:DNA-binding transcription factor activity"/>
    <property type="evidence" value="ECO:0000314"/>
    <property type="project" value="FlyBase"/>
</dbReference>
<dbReference type="GO" id="GO:0000981">
    <property type="term" value="F:DNA-binding transcription factor activity, RNA polymerase II-specific"/>
    <property type="evidence" value="ECO:0000318"/>
    <property type="project" value="GO_Central"/>
</dbReference>
<dbReference type="GO" id="GO:0000978">
    <property type="term" value="F:RNA polymerase II cis-regulatory region sequence-specific DNA binding"/>
    <property type="evidence" value="ECO:0000318"/>
    <property type="project" value="GO_Central"/>
</dbReference>
<dbReference type="GO" id="GO:0043565">
    <property type="term" value="F:sequence-specific DNA binding"/>
    <property type="evidence" value="ECO:0000314"/>
    <property type="project" value="FlyBase"/>
</dbReference>
<dbReference type="GO" id="GO:0008270">
    <property type="term" value="F:zinc ion binding"/>
    <property type="evidence" value="ECO:0007669"/>
    <property type="project" value="UniProtKB-KW"/>
</dbReference>
<dbReference type="GO" id="GO:0007527">
    <property type="term" value="P:adult somatic muscle development"/>
    <property type="evidence" value="ECO:0000315"/>
    <property type="project" value="FlyBase"/>
</dbReference>
<dbReference type="GO" id="GO:0046843">
    <property type="term" value="P:dorsal appendage formation"/>
    <property type="evidence" value="ECO:0000315"/>
    <property type="project" value="FlyBase"/>
</dbReference>
<dbReference type="GO" id="GO:0009953">
    <property type="term" value="P:dorsal/ventral pattern formation"/>
    <property type="evidence" value="ECO:0000315"/>
    <property type="project" value="FlyBase"/>
</dbReference>
<dbReference type="GO" id="GO:0045944">
    <property type="term" value="P:positive regulation of transcription by RNA polymerase II"/>
    <property type="evidence" value="ECO:0000314"/>
    <property type="project" value="FlyBase"/>
</dbReference>
<dbReference type="GO" id="GO:0032968">
    <property type="term" value="P:positive regulation of transcription elongation by RNA polymerase II"/>
    <property type="evidence" value="ECO:0000314"/>
    <property type="project" value="FlyBase"/>
</dbReference>
<dbReference type="GO" id="GO:0006355">
    <property type="term" value="P:regulation of DNA-templated transcription"/>
    <property type="evidence" value="ECO:0000318"/>
    <property type="project" value="GO_Central"/>
</dbReference>
<dbReference type="FunFam" id="3.30.160.60:FF:001968">
    <property type="entry name" value="chorion transcription factor Cf2 isoform X3"/>
    <property type="match status" value="1"/>
</dbReference>
<dbReference type="FunFam" id="3.30.160.60:FF:002337">
    <property type="entry name" value="chorion transcription factor Cf2 isoform X3"/>
    <property type="match status" value="1"/>
</dbReference>
<dbReference type="FunFam" id="3.30.160.60:FF:002716">
    <property type="entry name" value="Zinc finger protein 212"/>
    <property type="match status" value="1"/>
</dbReference>
<dbReference type="FunFam" id="3.30.160.60:FF:000110">
    <property type="entry name" value="Zinc finger protein-like"/>
    <property type="match status" value="2"/>
</dbReference>
<dbReference type="Gene3D" id="3.30.160.60">
    <property type="entry name" value="Classic Zinc Finger"/>
    <property type="match status" value="5"/>
</dbReference>
<dbReference type="InterPro" id="IPR050717">
    <property type="entry name" value="C2H2-ZF_Transcription_Reg"/>
</dbReference>
<dbReference type="InterPro" id="IPR036236">
    <property type="entry name" value="Znf_C2H2_sf"/>
</dbReference>
<dbReference type="InterPro" id="IPR013087">
    <property type="entry name" value="Znf_C2H2_type"/>
</dbReference>
<dbReference type="PANTHER" id="PTHR14196">
    <property type="entry name" value="ODD-SKIPPED - RELATED"/>
    <property type="match status" value="1"/>
</dbReference>
<dbReference type="PANTHER" id="PTHR14196:SF12">
    <property type="entry name" value="ZINC FINGER PROTEIN 208-LIKE"/>
    <property type="match status" value="1"/>
</dbReference>
<dbReference type="Pfam" id="PF00096">
    <property type="entry name" value="zf-C2H2"/>
    <property type="match status" value="5"/>
</dbReference>
<dbReference type="SMART" id="SM00355">
    <property type="entry name" value="ZnF_C2H2"/>
    <property type="match status" value="7"/>
</dbReference>
<dbReference type="SUPFAM" id="SSF57667">
    <property type="entry name" value="beta-beta-alpha zinc fingers"/>
    <property type="match status" value="3"/>
</dbReference>
<dbReference type="PROSITE" id="PS00028">
    <property type="entry name" value="ZINC_FINGER_C2H2_1"/>
    <property type="match status" value="7"/>
</dbReference>
<dbReference type="PROSITE" id="PS50157">
    <property type="entry name" value="ZINC_FINGER_C2H2_2"/>
    <property type="match status" value="6"/>
</dbReference>
<evidence type="ECO:0000255" key="1">
    <source>
        <dbReference type="PROSITE-ProRule" id="PRU00042"/>
    </source>
</evidence>
<evidence type="ECO:0000256" key="2">
    <source>
        <dbReference type="SAM" id="MobiDB-lite"/>
    </source>
</evidence>
<evidence type="ECO:0000269" key="3">
    <source>
    </source>
</evidence>
<evidence type="ECO:0000269" key="4">
    <source>
    </source>
</evidence>
<evidence type="ECO:0000303" key="5">
    <source>
    </source>
</evidence>
<evidence type="ECO:0000303" key="6">
    <source ref="4"/>
</evidence>
<evidence type="ECO:0000305" key="7"/>
<gene>
    <name type="primary">Cf2</name>
    <name type="ORF">CG11924</name>
</gene>
<feature type="chain" id="PRO_0000046914" description="Chorion transcription factor Cf2">
    <location>
        <begin position="1"/>
        <end position="510"/>
    </location>
</feature>
<feature type="zinc finger region" description="C2H2-type 1" evidence="1">
    <location>
        <begin position="74"/>
        <end position="97"/>
    </location>
</feature>
<feature type="zinc finger region" description="C2H2-type 2" evidence="1">
    <location>
        <begin position="125"/>
        <end position="148"/>
    </location>
</feature>
<feature type="zinc finger region" description="C2H2-type 3" evidence="1">
    <location>
        <begin position="366"/>
        <end position="388"/>
    </location>
</feature>
<feature type="zinc finger region" description="C2H2-type 4" evidence="1">
    <location>
        <begin position="401"/>
        <end position="423"/>
    </location>
</feature>
<feature type="zinc finger region" description="C2H2-type 5" evidence="1">
    <location>
        <begin position="429"/>
        <end position="451"/>
    </location>
</feature>
<feature type="zinc finger region" description="C2H2-type 6" evidence="1">
    <location>
        <begin position="457"/>
        <end position="479"/>
    </location>
</feature>
<feature type="zinc finger region" description="C2H2-type 7" evidence="1">
    <location>
        <begin position="485"/>
        <end position="508"/>
    </location>
</feature>
<feature type="region of interest" description="Disordered" evidence="2">
    <location>
        <begin position="1"/>
        <end position="40"/>
    </location>
</feature>
<feature type="region of interest" description="Disordered" evidence="2">
    <location>
        <begin position="222"/>
        <end position="279"/>
    </location>
</feature>
<feature type="compositionally biased region" description="Polar residues" evidence="2">
    <location>
        <begin position="1"/>
        <end position="10"/>
    </location>
</feature>
<feature type="compositionally biased region" description="Low complexity" evidence="2">
    <location>
        <begin position="30"/>
        <end position="40"/>
    </location>
</feature>
<feature type="compositionally biased region" description="Basic and acidic residues" evidence="2">
    <location>
        <begin position="222"/>
        <end position="237"/>
    </location>
</feature>
<feature type="compositionally biased region" description="Low complexity" evidence="2">
    <location>
        <begin position="240"/>
        <end position="257"/>
    </location>
</feature>
<feature type="splice variant" id="VSP_006824" description="In isoform II." evidence="5 6">
    <location>
        <begin position="430"/>
        <end position="457"/>
    </location>
</feature>
<feature type="sequence conflict" description="In Ref. 1; AAA28394/AAA28395/AAA28396 and 5; CAA37460." evidence="7" ref="1 5">
    <original>L</original>
    <variation>S</variation>
    <location>
        <position position="254"/>
    </location>
</feature>
<proteinExistence type="evidence at transcript level"/>
<reference key="1">
    <citation type="journal article" date="1992" name="Science">
        <title>Multiple zinc finger forms resulting from developmentally regulated alternative splicing of a transcription factor gene.</title>
        <authorList>
            <person name="Hsu T."/>
            <person name="Gogos J.A."/>
            <person name="Kirsh S.A."/>
            <person name="Kafatos F.C."/>
        </authorList>
    </citation>
    <scope>NUCLEOTIDE SEQUENCE [GENOMIC DNA]</scope>
    <scope>ALTERNATIVE SPLICING</scope>
    <scope>TISSUE SPECIFICITY</scope>
    <source>
        <strain>Oregon-R</strain>
        <tissue>Embryo</tissue>
        <tissue>Ovary</tissue>
    </source>
</reference>
<reference key="2">
    <citation type="journal article" date="2000" name="Science">
        <title>The genome sequence of Drosophila melanogaster.</title>
        <authorList>
            <person name="Adams M.D."/>
            <person name="Celniker S.E."/>
            <person name="Holt R.A."/>
            <person name="Evans C.A."/>
            <person name="Gocayne J.D."/>
            <person name="Amanatides P.G."/>
            <person name="Scherer S.E."/>
            <person name="Li P.W."/>
            <person name="Hoskins R.A."/>
            <person name="Galle R.F."/>
            <person name="George R.A."/>
            <person name="Lewis S.E."/>
            <person name="Richards S."/>
            <person name="Ashburner M."/>
            <person name="Henderson S.N."/>
            <person name="Sutton G.G."/>
            <person name="Wortman J.R."/>
            <person name="Yandell M.D."/>
            <person name="Zhang Q."/>
            <person name="Chen L.X."/>
            <person name="Brandon R.C."/>
            <person name="Rogers Y.-H.C."/>
            <person name="Blazej R.G."/>
            <person name="Champe M."/>
            <person name="Pfeiffer B.D."/>
            <person name="Wan K.H."/>
            <person name="Doyle C."/>
            <person name="Baxter E.G."/>
            <person name="Helt G."/>
            <person name="Nelson C.R."/>
            <person name="Miklos G.L.G."/>
            <person name="Abril J.F."/>
            <person name="Agbayani A."/>
            <person name="An H.-J."/>
            <person name="Andrews-Pfannkoch C."/>
            <person name="Baldwin D."/>
            <person name="Ballew R.M."/>
            <person name="Basu A."/>
            <person name="Baxendale J."/>
            <person name="Bayraktaroglu L."/>
            <person name="Beasley E.M."/>
            <person name="Beeson K.Y."/>
            <person name="Benos P.V."/>
            <person name="Berman B.P."/>
            <person name="Bhandari D."/>
            <person name="Bolshakov S."/>
            <person name="Borkova D."/>
            <person name="Botchan M.R."/>
            <person name="Bouck J."/>
            <person name="Brokstein P."/>
            <person name="Brottier P."/>
            <person name="Burtis K.C."/>
            <person name="Busam D.A."/>
            <person name="Butler H."/>
            <person name="Cadieu E."/>
            <person name="Center A."/>
            <person name="Chandra I."/>
            <person name="Cherry J.M."/>
            <person name="Cawley S."/>
            <person name="Dahlke C."/>
            <person name="Davenport L.B."/>
            <person name="Davies P."/>
            <person name="de Pablos B."/>
            <person name="Delcher A."/>
            <person name="Deng Z."/>
            <person name="Mays A.D."/>
            <person name="Dew I."/>
            <person name="Dietz S.M."/>
            <person name="Dodson K."/>
            <person name="Doup L.E."/>
            <person name="Downes M."/>
            <person name="Dugan-Rocha S."/>
            <person name="Dunkov B.C."/>
            <person name="Dunn P."/>
            <person name="Durbin K.J."/>
            <person name="Evangelista C.C."/>
            <person name="Ferraz C."/>
            <person name="Ferriera S."/>
            <person name="Fleischmann W."/>
            <person name="Fosler C."/>
            <person name="Gabrielian A.E."/>
            <person name="Garg N.S."/>
            <person name="Gelbart W.M."/>
            <person name="Glasser K."/>
            <person name="Glodek A."/>
            <person name="Gong F."/>
            <person name="Gorrell J.H."/>
            <person name="Gu Z."/>
            <person name="Guan P."/>
            <person name="Harris M."/>
            <person name="Harris N.L."/>
            <person name="Harvey D.A."/>
            <person name="Heiman T.J."/>
            <person name="Hernandez J.R."/>
            <person name="Houck J."/>
            <person name="Hostin D."/>
            <person name="Houston K.A."/>
            <person name="Howland T.J."/>
            <person name="Wei M.-H."/>
            <person name="Ibegwam C."/>
            <person name="Jalali M."/>
            <person name="Kalush F."/>
            <person name="Karpen G.H."/>
            <person name="Ke Z."/>
            <person name="Kennison J.A."/>
            <person name="Ketchum K.A."/>
            <person name="Kimmel B.E."/>
            <person name="Kodira C.D."/>
            <person name="Kraft C.L."/>
            <person name="Kravitz S."/>
            <person name="Kulp D."/>
            <person name="Lai Z."/>
            <person name="Lasko P."/>
            <person name="Lei Y."/>
            <person name="Levitsky A.A."/>
            <person name="Li J.H."/>
            <person name="Li Z."/>
            <person name="Liang Y."/>
            <person name="Lin X."/>
            <person name="Liu X."/>
            <person name="Mattei B."/>
            <person name="McIntosh T.C."/>
            <person name="McLeod M.P."/>
            <person name="McPherson D."/>
            <person name="Merkulov G."/>
            <person name="Milshina N.V."/>
            <person name="Mobarry C."/>
            <person name="Morris J."/>
            <person name="Moshrefi A."/>
            <person name="Mount S.M."/>
            <person name="Moy M."/>
            <person name="Murphy B."/>
            <person name="Murphy L."/>
            <person name="Muzny D.M."/>
            <person name="Nelson D.L."/>
            <person name="Nelson D.R."/>
            <person name="Nelson K.A."/>
            <person name="Nixon K."/>
            <person name="Nusskern D.R."/>
            <person name="Pacleb J.M."/>
            <person name="Palazzolo M."/>
            <person name="Pittman G.S."/>
            <person name="Pan S."/>
            <person name="Pollard J."/>
            <person name="Puri V."/>
            <person name="Reese M.G."/>
            <person name="Reinert K."/>
            <person name="Remington K."/>
            <person name="Saunders R.D.C."/>
            <person name="Scheeler F."/>
            <person name="Shen H."/>
            <person name="Shue B.C."/>
            <person name="Siden-Kiamos I."/>
            <person name="Simpson M."/>
            <person name="Skupski M.P."/>
            <person name="Smith T.J."/>
            <person name="Spier E."/>
            <person name="Spradling A.C."/>
            <person name="Stapleton M."/>
            <person name="Strong R."/>
            <person name="Sun E."/>
            <person name="Svirskas R."/>
            <person name="Tector C."/>
            <person name="Turner R."/>
            <person name="Venter E."/>
            <person name="Wang A.H."/>
            <person name="Wang X."/>
            <person name="Wang Z.-Y."/>
            <person name="Wassarman D.A."/>
            <person name="Weinstock G.M."/>
            <person name="Weissenbach J."/>
            <person name="Williams S.M."/>
            <person name="Woodage T."/>
            <person name="Worley K.C."/>
            <person name="Wu D."/>
            <person name="Yang S."/>
            <person name="Yao Q.A."/>
            <person name="Ye J."/>
            <person name="Yeh R.-F."/>
            <person name="Zaveri J.S."/>
            <person name="Zhan M."/>
            <person name="Zhang G."/>
            <person name="Zhao Q."/>
            <person name="Zheng L."/>
            <person name="Zheng X.H."/>
            <person name="Zhong F.N."/>
            <person name="Zhong W."/>
            <person name="Zhou X."/>
            <person name="Zhu S.C."/>
            <person name="Zhu X."/>
            <person name="Smith H.O."/>
            <person name="Gibbs R.A."/>
            <person name="Myers E.W."/>
            <person name="Rubin G.M."/>
            <person name="Venter J.C."/>
        </authorList>
    </citation>
    <scope>NUCLEOTIDE SEQUENCE [LARGE SCALE GENOMIC DNA]</scope>
    <source>
        <strain>Berkeley</strain>
    </source>
</reference>
<reference key="3">
    <citation type="journal article" date="2002" name="Genome Biol.">
        <title>Annotation of the Drosophila melanogaster euchromatic genome: a systematic review.</title>
        <authorList>
            <person name="Misra S."/>
            <person name="Crosby M.A."/>
            <person name="Mungall C.J."/>
            <person name="Matthews B.B."/>
            <person name="Campbell K.S."/>
            <person name="Hradecky P."/>
            <person name="Huang Y."/>
            <person name="Kaminker J.S."/>
            <person name="Millburn G.H."/>
            <person name="Prochnik S.E."/>
            <person name="Smith C.D."/>
            <person name="Tupy J.L."/>
            <person name="Whitfield E.J."/>
            <person name="Bayraktaroglu L."/>
            <person name="Berman B.P."/>
            <person name="Bettencourt B.R."/>
            <person name="Celniker S.E."/>
            <person name="de Grey A.D.N.J."/>
            <person name="Drysdale R.A."/>
            <person name="Harris N.L."/>
            <person name="Richter J."/>
            <person name="Russo S."/>
            <person name="Schroeder A.J."/>
            <person name="Shu S.Q."/>
            <person name="Stapleton M."/>
            <person name="Yamada C."/>
            <person name="Ashburner M."/>
            <person name="Gelbart W.M."/>
            <person name="Rubin G.M."/>
            <person name="Lewis S.E."/>
        </authorList>
    </citation>
    <scope>GENOME REANNOTATION</scope>
    <scope>ALTERNATIVE SPLICING</scope>
    <source>
        <strain>Berkeley</strain>
    </source>
</reference>
<reference key="4">
    <citation type="submission" date="2006-08" db="EMBL/GenBank/DDBJ databases">
        <authorList>
            <person name="Stapleton M."/>
            <person name="Carlson J.W."/>
            <person name="Chavez C."/>
            <person name="Frise E."/>
            <person name="George R.A."/>
            <person name="Pacleb J.M."/>
            <person name="Park S."/>
            <person name="Wan K.H."/>
            <person name="Yu C."/>
            <person name="Rubin G.M."/>
            <person name="Celniker S.E."/>
        </authorList>
    </citation>
    <scope>NUCLEOTIDE SEQUENCE [LARGE SCALE MRNA] (ISOFORM II)</scope>
    <scope>NUCLEOTIDE SEQUENCE [LARGE SCALE MRNA] OF 1-455 (ISOFORM I)</scope>
    <source>
        <strain>Berkeley</strain>
        <tissue>Ovary</tissue>
        <tissue>Testis</tissue>
    </source>
</reference>
<reference key="5">
    <citation type="journal article" date="1990" name="Genes Dev.">
        <title>Proteins that bind to Drosophila chorion cis-regulatory elements: a new C2H2 zinc finger protein and a C2C2 steroid receptor-like component.</title>
        <authorList>
            <person name="Shea M.J."/>
            <person name="King D.L."/>
            <person name="Conboy M.J."/>
            <person name="Mariani B.D."/>
            <person name="Kafatos F.C."/>
        </authorList>
    </citation>
    <scope>NUCLEOTIDE SEQUENCE [MRNA] OF 248-510 (ISOFORM II)</scope>
    <scope>FUNCTION</scope>
    <scope>SUBCELLULAR LOCATION</scope>
    <source>
        <tissue>Embryo</tissue>
    </source>
</reference>
<comment type="function">
    <text evidence="4">Transcriptional regulator; binds to the promoter region of Cp15. Also binds to its own promoter, thus having a probable autoregulatory role.</text>
</comment>
<comment type="subcellular location">
    <subcellularLocation>
        <location evidence="4">Nucleus</location>
    </subcellularLocation>
</comment>
<comment type="alternative products">
    <event type="alternative splicing"/>
    <isoform>
        <id>P20385-1</id>
        <name>I</name>
        <name>A</name>
        <sequence type="displayed"/>
    </isoform>
    <isoform>
        <id>P20385-2</id>
        <name>II</name>
        <name>B</name>
        <name>C</name>
        <name>III</name>
        <sequence type="described" ref="VSP_006824"/>
    </isoform>
</comment>
<comment type="tissue specificity">
    <text evidence="3">Isoform I is found in embryos, pupae and adult somatic tissue; isoform II occurs in embryos, pupae, ovaries, testis and to a lesser extent in adult somatic tissue.</text>
</comment>
<comment type="sequence caution" evidence="7">
    <conflict type="erroneous gene model prediction">
        <sequence resource="EMBL-CDS" id="AAA28394"/>
    </conflict>
</comment>
<comment type="sequence caution" evidence="7">
    <conflict type="erroneous initiation">
        <sequence resource="EMBL-CDS" id="AAA28394"/>
    </conflict>
    <text>Truncated N-terminus.</text>
</comment>
<comment type="sequence caution" evidence="7">
    <conflict type="miscellaneous discrepancy">
        <sequence resource="EMBL-CDS" id="AAV37010"/>
    </conflict>
    <text>Contaminating sequence. Potential poly-A sequence.</text>
</comment>
<accession>P20385</accession>
<accession>Q01522</accession>
<accession>Q0IGV4</accession>
<accession>Q24263</accession>
<accession>Q5U0W7</accession>
<accession>Q86BN0</accession>
<accession>Q86BN1</accession>
<accession>Q9VR41</accession>
<keyword id="KW-0025">Alternative splicing</keyword>
<keyword id="KW-0238">DNA-binding</keyword>
<keyword id="KW-0479">Metal-binding</keyword>
<keyword id="KW-0539">Nucleus</keyword>
<keyword id="KW-1185">Reference proteome</keyword>
<keyword id="KW-0677">Repeat</keyword>
<keyword id="KW-0804">Transcription</keyword>
<keyword id="KW-0805">Transcription regulation</keyword>
<keyword id="KW-0862">Zinc</keyword>
<keyword id="KW-0863">Zinc-finger</keyword>
<protein>
    <recommendedName>
        <fullName>Chorion transcription factor Cf2</fullName>
    </recommendedName>
</protein>